<sequence>MKTRPKTRIKTRVKICGIRSPKDIEFAALYGADAVGFITEVPVESPRKLDSDTAAALISKVPKCLDSVMVIMPETSTSALELIEKVKPNIVQIHSDLPLSELKAVREKADIPIIKTLSVPAEQEAPKLHNIVTRLLEEVRELEESGIVDSVLLDSGIAGKTGGTGCVHDWDLSRRIAEETELPLILAGGLKPENVQEAIRSVSPYAVDTASGVETQGKKDSVKVRKFIEEVRCTYAFL</sequence>
<feature type="chain" id="PRO_0000154402" description="N-(5'-phosphoribosyl)anthranilate isomerase">
    <location>
        <begin position="1"/>
        <end position="238"/>
    </location>
</feature>
<proteinExistence type="inferred from homology"/>
<protein>
    <recommendedName>
        <fullName evidence="1">N-(5'-phosphoribosyl)anthranilate isomerase</fullName>
        <shortName evidence="1">PRAI</shortName>
        <ecNumber evidence="1">5.3.1.24</ecNumber>
    </recommendedName>
</protein>
<gene>
    <name evidence="1" type="primary">trpF</name>
    <name type="ordered locus">MA_2988</name>
</gene>
<accession>Q8TLP6</accession>
<dbReference type="EC" id="5.3.1.24" evidence="1"/>
<dbReference type="EMBL" id="AE010299">
    <property type="protein sequence ID" value="AAM06361.1"/>
    <property type="status" value="ALT_INIT"/>
    <property type="molecule type" value="Genomic_DNA"/>
</dbReference>
<dbReference type="RefSeq" id="WP_048065580.1">
    <property type="nucleotide sequence ID" value="NC_003552.1"/>
</dbReference>
<dbReference type="SMR" id="Q8TLP6"/>
<dbReference type="FunCoup" id="Q8TLP6">
    <property type="interactions" value="78"/>
</dbReference>
<dbReference type="STRING" id="188937.MA_2988"/>
<dbReference type="EnsemblBacteria" id="AAM06361">
    <property type="protein sequence ID" value="AAM06361"/>
    <property type="gene ID" value="MA_2988"/>
</dbReference>
<dbReference type="GeneID" id="1474882"/>
<dbReference type="KEGG" id="mac:MA_2988"/>
<dbReference type="HOGENOM" id="CLU_076364_2_1_2"/>
<dbReference type="InParanoid" id="Q8TLP6"/>
<dbReference type="OrthoDB" id="27513at2157"/>
<dbReference type="PhylomeDB" id="Q8TLP6"/>
<dbReference type="UniPathway" id="UPA00035">
    <property type="reaction ID" value="UER00042"/>
</dbReference>
<dbReference type="Proteomes" id="UP000002487">
    <property type="component" value="Chromosome"/>
</dbReference>
<dbReference type="GO" id="GO:0004640">
    <property type="term" value="F:phosphoribosylanthranilate isomerase activity"/>
    <property type="evidence" value="ECO:0000318"/>
    <property type="project" value="GO_Central"/>
</dbReference>
<dbReference type="GO" id="GO:0000162">
    <property type="term" value="P:L-tryptophan biosynthetic process"/>
    <property type="evidence" value="ECO:0000318"/>
    <property type="project" value="GO_Central"/>
</dbReference>
<dbReference type="CDD" id="cd00405">
    <property type="entry name" value="PRAI"/>
    <property type="match status" value="1"/>
</dbReference>
<dbReference type="FunFam" id="3.20.20.70:FF:000075">
    <property type="entry name" value="Tryptophan biosynthesis protein TRP1"/>
    <property type="match status" value="1"/>
</dbReference>
<dbReference type="Gene3D" id="3.20.20.70">
    <property type="entry name" value="Aldolase class I"/>
    <property type="match status" value="1"/>
</dbReference>
<dbReference type="HAMAP" id="MF_00135">
    <property type="entry name" value="PRAI"/>
    <property type="match status" value="1"/>
</dbReference>
<dbReference type="InterPro" id="IPR013785">
    <property type="entry name" value="Aldolase_TIM"/>
</dbReference>
<dbReference type="InterPro" id="IPR001240">
    <property type="entry name" value="PRAI_dom"/>
</dbReference>
<dbReference type="InterPro" id="IPR011060">
    <property type="entry name" value="RibuloseP-bd_barrel"/>
</dbReference>
<dbReference type="InterPro" id="IPR044643">
    <property type="entry name" value="TrpF_fam"/>
</dbReference>
<dbReference type="PANTHER" id="PTHR42894">
    <property type="entry name" value="N-(5'-PHOSPHORIBOSYL)ANTHRANILATE ISOMERASE"/>
    <property type="match status" value="1"/>
</dbReference>
<dbReference type="PANTHER" id="PTHR42894:SF1">
    <property type="entry name" value="N-(5'-PHOSPHORIBOSYL)ANTHRANILATE ISOMERASE"/>
    <property type="match status" value="1"/>
</dbReference>
<dbReference type="Pfam" id="PF00697">
    <property type="entry name" value="PRAI"/>
    <property type="match status" value="1"/>
</dbReference>
<dbReference type="SUPFAM" id="SSF51366">
    <property type="entry name" value="Ribulose-phoshate binding barrel"/>
    <property type="match status" value="1"/>
</dbReference>
<name>TRPF_METAC</name>
<evidence type="ECO:0000255" key="1">
    <source>
        <dbReference type="HAMAP-Rule" id="MF_00135"/>
    </source>
</evidence>
<evidence type="ECO:0000305" key="2"/>
<reference key="1">
    <citation type="journal article" date="2002" name="Genome Res.">
        <title>The genome of Methanosarcina acetivorans reveals extensive metabolic and physiological diversity.</title>
        <authorList>
            <person name="Galagan J.E."/>
            <person name="Nusbaum C."/>
            <person name="Roy A."/>
            <person name="Endrizzi M.G."/>
            <person name="Macdonald P."/>
            <person name="FitzHugh W."/>
            <person name="Calvo S."/>
            <person name="Engels R."/>
            <person name="Smirnov S."/>
            <person name="Atnoor D."/>
            <person name="Brown A."/>
            <person name="Allen N."/>
            <person name="Naylor J."/>
            <person name="Stange-Thomann N."/>
            <person name="DeArellano K."/>
            <person name="Johnson R."/>
            <person name="Linton L."/>
            <person name="McEwan P."/>
            <person name="McKernan K."/>
            <person name="Talamas J."/>
            <person name="Tirrell A."/>
            <person name="Ye W."/>
            <person name="Zimmer A."/>
            <person name="Barber R.D."/>
            <person name="Cann I."/>
            <person name="Graham D.E."/>
            <person name="Grahame D.A."/>
            <person name="Guss A.M."/>
            <person name="Hedderich R."/>
            <person name="Ingram-Smith C."/>
            <person name="Kuettner H.C."/>
            <person name="Krzycki J.A."/>
            <person name="Leigh J.A."/>
            <person name="Li W."/>
            <person name="Liu J."/>
            <person name="Mukhopadhyay B."/>
            <person name="Reeve J.N."/>
            <person name="Smith K."/>
            <person name="Springer T.A."/>
            <person name="Umayam L.A."/>
            <person name="White O."/>
            <person name="White R.H."/>
            <person name="de Macario E.C."/>
            <person name="Ferry J.G."/>
            <person name="Jarrell K.F."/>
            <person name="Jing H."/>
            <person name="Macario A.J.L."/>
            <person name="Paulsen I.T."/>
            <person name="Pritchett M."/>
            <person name="Sowers K.R."/>
            <person name="Swanson R.V."/>
            <person name="Zinder S.H."/>
            <person name="Lander E."/>
            <person name="Metcalf W.W."/>
            <person name="Birren B."/>
        </authorList>
    </citation>
    <scope>NUCLEOTIDE SEQUENCE [LARGE SCALE GENOMIC DNA]</scope>
    <source>
        <strain>ATCC 35395 / DSM 2834 / JCM 12185 / C2A</strain>
    </source>
</reference>
<comment type="catalytic activity">
    <reaction evidence="1">
        <text>N-(5-phospho-beta-D-ribosyl)anthranilate = 1-(2-carboxyphenylamino)-1-deoxy-D-ribulose 5-phosphate</text>
        <dbReference type="Rhea" id="RHEA:21540"/>
        <dbReference type="ChEBI" id="CHEBI:18277"/>
        <dbReference type="ChEBI" id="CHEBI:58613"/>
        <dbReference type="EC" id="5.3.1.24"/>
    </reaction>
</comment>
<comment type="pathway">
    <text evidence="1">Amino-acid biosynthesis; L-tryptophan biosynthesis; L-tryptophan from chorismate: step 3/5.</text>
</comment>
<comment type="similarity">
    <text evidence="1">Belongs to the TrpF family.</text>
</comment>
<comment type="sequence caution" evidence="2">
    <conflict type="erroneous initiation">
        <sequence resource="EMBL-CDS" id="AAM06361"/>
    </conflict>
</comment>
<organism>
    <name type="scientific">Methanosarcina acetivorans (strain ATCC 35395 / DSM 2834 / JCM 12185 / C2A)</name>
    <dbReference type="NCBI Taxonomy" id="188937"/>
    <lineage>
        <taxon>Archaea</taxon>
        <taxon>Methanobacteriati</taxon>
        <taxon>Methanobacteriota</taxon>
        <taxon>Stenosarchaea group</taxon>
        <taxon>Methanomicrobia</taxon>
        <taxon>Methanosarcinales</taxon>
        <taxon>Methanosarcinaceae</taxon>
        <taxon>Methanosarcina</taxon>
    </lineage>
</organism>
<keyword id="KW-0028">Amino-acid biosynthesis</keyword>
<keyword id="KW-0057">Aromatic amino acid biosynthesis</keyword>
<keyword id="KW-0413">Isomerase</keyword>
<keyword id="KW-1185">Reference proteome</keyword>
<keyword id="KW-0822">Tryptophan biosynthesis</keyword>